<proteinExistence type="inferred from homology"/>
<name>RSMH_LEPBP</name>
<organism>
    <name type="scientific">Leptospira biflexa serovar Patoc (strain Patoc 1 / ATCC 23582 / Paris)</name>
    <dbReference type="NCBI Taxonomy" id="456481"/>
    <lineage>
        <taxon>Bacteria</taxon>
        <taxon>Pseudomonadati</taxon>
        <taxon>Spirochaetota</taxon>
        <taxon>Spirochaetia</taxon>
        <taxon>Leptospirales</taxon>
        <taxon>Leptospiraceae</taxon>
        <taxon>Leptospira</taxon>
    </lineage>
</organism>
<dbReference type="EC" id="2.1.1.199" evidence="1"/>
<dbReference type="EMBL" id="CP000786">
    <property type="protein sequence ID" value="ABZ97868.1"/>
    <property type="molecule type" value="Genomic_DNA"/>
</dbReference>
<dbReference type="RefSeq" id="WP_012388746.1">
    <property type="nucleotide sequence ID" value="NC_010602.1"/>
</dbReference>
<dbReference type="SMR" id="B0SRS3"/>
<dbReference type="STRING" id="456481.LEPBI_I1762"/>
<dbReference type="KEGG" id="lbi:LEPBI_I1762"/>
<dbReference type="HOGENOM" id="CLU_038422_2_0_12"/>
<dbReference type="OrthoDB" id="9806637at2"/>
<dbReference type="BioCyc" id="LBIF456481:LEPBI_RS08705-MONOMER"/>
<dbReference type="Proteomes" id="UP000001847">
    <property type="component" value="Chromosome I"/>
</dbReference>
<dbReference type="GO" id="GO:0005737">
    <property type="term" value="C:cytoplasm"/>
    <property type="evidence" value="ECO:0007669"/>
    <property type="project" value="UniProtKB-SubCell"/>
</dbReference>
<dbReference type="GO" id="GO:0071424">
    <property type="term" value="F:rRNA (cytosine-N4-)-methyltransferase activity"/>
    <property type="evidence" value="ECO:0007669"/>
    <property type="project" value="UniProtKB-UniRule"/>
</dbReference>
<dbReference type="GO" id="GO:0070475">
    <property type="term" value="P:rRNA base methylation"/>
    <property type="evidence" value="ECO:0007669"/>
    <property type="project" value="UniProtKB-UniRule"/>
</dbReference>
<dbReference type="Gene3D" id="1.10.150.170">
    <property type="entry name" value="Putative methyltransferase TM0872, insert domain"/>
    <property type="match status" value="1"/>
</dbReference>
<dbReference type="Gene3D" id="3.40.50.150">
    <property type="entry name" value="Vaccinia Virus protein VP39"/>
    <property type="match status" value="1"/>
</dbReference>
<dbReference type="HAMAP" id="MF_01007">
    <property type="entry name" value="16SrRNA_methyltr_H"/>
    <property type="match status" value="1"/>
</dbReference>
<dbReference type="InterPro" id="IPR002903">
    <property type="entry name" value="RsmH"/>
</dbReference>
<dbReference type="InterPro" id="IPR023397">
    <property type="entry name" value="SAM-dep_MeTrfase_MraW_recog"/>
</dbReference>
<dbReference type="InterPro" id="IPR029063">
    <property type="entry name" value="SAM-dependent_MTases_sf"/>
</dbReference>
<dbReference type="NCBIfam" id="TIGR00006">
    <property type="entry name" value="16S rRNA (cytosine(1402)-N(4))-methyltransferase RsmH"/>
    <property type="match status" value="1"/>
</dbReference>
<dbReference type="PANTHER" id="PTHR11265:SF0">
    <property type="entry name" value="12S RRNA N4-METHYLCYTIDINE METHYLTRANSFERASE"/>
    <property type="match status" value="1"/>
</dbReference>
<dbReference type="PANTHER" id="PTHR11265">
    <property type="entry name" value="S-ADENOSYL-METHYLTRANSFERASE MRAW"/>
    <property type="match status" value="1"/>
</dbReference>
<dbReference type="Pfam" id="PF01795">
    <property type="entry name" value="Methyltransf_5"/>
    <property type="match status" value="1"/>
</dbReference>
<dbReference type="PIRSF" id="PIRSF004486">
    <property type="entry name" value="MraW"/>
    <property type="match status" value="1"/>
</dbReference>
<dbReference type="SUPFAM" id="SSF81799">
    <property type="entry name" value="Putative methyltransferase TM0872, insert domain"/>
    <property type="match status" value="1"/>
</dbReference>
<dbReference type="SUPFAM" id="SSF53335">
    <property type="entry name" value="S-adenosyl-L-methionine-dependent methyltransferases"/>
    <property type="match status" value="1"/>
</dbReference>
<gene>
    <name evidence="1" type="primary">rsmH</name>
    <name type="synonym">mraW</name>
    <name type="ordered locus">LEPBI_I1762</name>
</gene>
<comment type="function">
    <text evidence="1">Specifically methylates the N4 position of cytidine in position 1402 (C1402) of 16S rRNA.</text>
</comment>
<comment type="catalytic activity">
    <reaction evidence="1">
        <text>cytidine(1402) in 16S rRNA + S-adenosyl-L-methionine = N(4)-methylcytidine(1402) in 16S rRNA + S-adenosyl-L-homocysteine + H(+)</text>
        <dbReference type="Rhea" id="RHEA:42928"/>
        <dbReference type="Rhea" id="RHEA-COMP:10286"/>
        <dbReference type="Rhea" id="RHEA-COMP:10287"/>
        <dbReference type="ChEBI" id="CHEBI:15378"/>
        <dbReference type="ChEBI" id="CHEBI:57856"/>
        <dbReference type="ChEBI" id="CHEBI:59789"/>
        <dbReference type="ChEBI" id="CHEBI:74506"/>
        <dbReference type="ChEBI" id="CHEBI:82748"/>
        <dbReference type="EC" id="2.1.1.199"/>
    </reaction>
</comment>
<comment type="subcellular location">
    <subcellularLocation>
        <location evidence="1">Cytoplasm</location>
    </subcellularLocation>
</comment>
<comment type="similarity">
    <text evidence="1">Belongs to the methyltransferase superfamily. RsmH family.</text>
</comment>
<protein>
    <recommendedName>
        <fullName evidence="1">Ribosomal RNA small subunit methyltransferase H</fullName>
        <ecNumber evidence="1">2.1.1.199</ecNumber>
    </recommendedName>
    <alternativeName>
        <fullName evidence="1">16S rRNA m(4)C1402 methyltransferase</fullName>
    </alternativeName>
    <alternativeName>
        <fullName evidence="1">rRNA (cytosine-N(4)-)-methyltransferase RsmH</fullName>
    </alternativeName>
</protein>
<accession>B0SRS3</accession>
<evidence type="ECO:0000255" key="1">
    <source>
        <dbReference type="HAMAP-Rule" id="MF_01007"/>
    </source>
</evidence>
<feature type="chain" id="PRO_0000386955" description="Ribosomal RNA small subunit methyltransferase H">
    <location>
        <begin position="1"/>
        <end position="314"/>
    </location>
</feature>
<feature type="binding site" evidence="1">
    <location>
        <begin position="37"/>
        <end position="39"/>
    </location>
    <ligand>
        <name>S-adenosyl-L-methionine</name>
        <dbReference type="ChEBI" id="CHEBI:59789"/>
    </ligand>
</feature>
<feature type="binding site" evidence="1">
    <location>
        <position position="56"/>
    </location>
    <ligand>
        <name>S-adenosyl-L-methionine</name>
        <dbReference type="ChEBI" id="CHEBI:59789"/>
    </ligand>
</feature>
<feature type="binding site" evidence="1">
    <location>
        <position position="86"/>
    </location>
    <ligand>
        <name>S-adenosyl-L-methionine</name>
        <dbReference type="ChEBI" id="CHEBI:59789"/>
    </ligand>
</feature>
<feature type="binding site" evidence="1">
    <location>
        <position position="108"/>
    </location>
    <ligand>
        <name>S-adenosyl-L-methionine</name>
        <dbReference type="ChEBI" id="CHEBI:59789"/>
    </ligand>
</feature>
<feature type="binding site" evidence="1">
    <location>
        <position position="115"/>
    </location>
    <ligand>
        <name>S-adenosyl-L-methionine</name>
        <dbReference type="ChEBI" id="CHEBI:59789"/>
    </ligand>
</feature>
<keyword id="KW-0963">Cytoplasm</keyword>
<keyword id="KW-0489">Methyltransferase</keyword>
<keyword id="KW-1185">Reference proteome</keyword>
<keyword id="KW-0698">rRNA processing</keyword>
<keyword id="KW-0949">S-adenosyl-L-methionine</keyword>
<keyword id="KW-0808">Transferase</keyword>
<sequence>MLESPHIPVLPSEVISLLQQTKNPNPQWFLDGTAGEGGHSKLILKTFPEAKLILIDRDAVMLERAKKEILKEIGSLDRVHAFQMNFSEVDSELLQEVGCPSLDGALVDLGVSLFHFLHSGRGFTFKNDEPLDMRLEANIGGKTAADVVNYSSVLHLKKVFWEYGEERWALKIANNIVQTRHKKKFGTNTDLVKLVEASIPRKFWPKESHPATRIFQALRIEVNEELVHAEKGIRALAQCLGIGGVLTCISFHSLEDRIVKWTFRDLKDNGPFEILTKKPILPSETEIKENRASRSAKLRGLMKINPIKESRWEK</sequence>
<reference key="1">
    <citation type="journal article" date="2008" name="PLoS ONE">
        <title>Genome sequence of the saprophyte Leptospira biflexa provides insights into the evolution of Leptospira and the pathogenesis of leptospirosis.</title>
        <authorList>
            <person name="Picardeau M."/>
            <person name="Bulach D.M."/>
            <person name="Bouchier C."/>
            <person name="Zuerner R.L."/>
            <person name="Zidane N."/>
            <person name="Wilson P.J."/>
            <person name="Creno S."/>
            <person name="Kuczek E.S."/>
            <person name="Bommezzadri S."/>
            <person name="Davis J.C."/>
            <person name="McGrath A."/>
            <person name="Johnson M.J."/>
            <person name="Boursaux-Eude C."/>
            <person name="Seemann T."/>
            <person name="Rouy Z."/>
            <person name="Coppel R.L."/>
            <person name="Rood J.I."/>
            <person name="Lajus A."/>
            <person name="Davies J.K."/>
            <person name="Medigue C."/>
            <person name="Adler B."/>
        </authorList>
    </citation>
    <scope>NUCLEOTIDE SEQUENCE [LARGE SCALE GENOMIC DNA]</scope>
    <source>
        <strain>Patoc 1 / ATCC 23582 / Paris</strain>
    </source>
</reference>